<sequence length="386" mass="42272">MISHRNAIANIMQIVTYESTYQSDEPELCLGVLPQSHIYSLVVVSQASIWRGDGVVVLQGFELEQTLLAIQTNGIKRLWLVPPMLVAITKAPRIVESYDLSSVSVAAVGASGISKDVMATFGELLPACKIIQGYGMTETTGVVCFGNVEDSMDGSCGHLYPGYEARLIDGEGKDVESHNTPGELVLRSPSVVIGYYNDESATSEAMMDGGWLRTGDLVEIRQSEKGHEHVFVVDRVKELIKVRGLQVAPAELESHLILHPAVAEVAVIPVPDDRAGELPKAYIVRASGAELDEQVLRKELSQYVEGQFARHKHLDGGIEFLDSLPKTASGKMQRKTLKEKARTDAEARRQAREKAANGVHKVHVNGVKRPEKMEVFDLSSDDEDDD</sequence>
<dbReference type="EC" id="6.2.1.-" evidence="7"/>
<dbReference type="EMBL" id="LSBH01000002">
    <property type="protein sequence ID" value="OAQ83766.1"/>
    <property type="molecule type" value="Genomic_DNA"/>
</dbReference>
<dbReference type="EMBL" id="LSBI01000004">
    <property type="protein sequence ID" value="OAQ90546.1"/>
    <property type="molecule type" value="Genomic_DNA"/>
</dbReference>
<dbReference type="RefSeq" id="XP_018179265.1">
    <property type="nucleotide sequence ID" value="XM_018321785.1"/>
</dbReference>
<dbReference type="SMR" id="A0A179HJB8"/>
<dbReference type="STRING" id="33203.A0A179HJB8"/>
<dbReference type="GeneID" id="28886834"/>
<dbReference type="KEGG" id="plj:28886834"/>
<dbReference type="OMA" id="AIANIMQ"/>
<dbReference type="OrthoDB" id="6509636at2759"/>
<dbReference type="Proteomes" id="UP000078240">
    <property type="component" value="Unassembled WGS sequence"/>
</dbReference>
<dbReference type="Proteomes" id="UP000078340">
    <property type="component" value="Unassembled WGS sequence"/>
</dbReference>
<dbReference type="GO" id="GO:0005524">
    <property type="term" value="F:ATP binding"/>
    <property type="evidence" value="ECO:0007669"/>
    <property type="project" value="UniProtKB-KW"/>
</dbReference>
<dbReference type="GO" id="GO:0016405">
    <property type="term" value="F:CoA-ligase activity"/>
    <property type="evidence" value="ECO:0007669"/>
    <property type="project" value="TreeGrafter"/>
</dbReference>
<dbReference type="FunFam" id="3.30.300.30:FF:000007">
    <property type="entry name" value="4-coumarate--CoA ligase 2"/>
    <property type="match status" value="1"/>
</dbReference>
<dbReference type="Gene3D" id="3.30.300.30">
    <property type="match status" value="1"/>
</dbReference>
<dbReference type="Gene3D" id="3.40.50.12780">
    <property type="entry name" value="N-terminal domain of ligase-like"/>
    <property type="match status" value="1"/>
</dbReference>
<dbReference type="InterPro" id="IPR025110">
    <property type="entry name" value="AMP-bd_C"/>
</dbReference>
<dbReference type="InterPro" id="IPR045851">
    <property type="entry name" value="AMP-bd_C_sf"/>
</dbReference>
<dbReference type="InterPro" id="IPR000873">
    <property type="entry name" value="AMP-dep_synth/lig_dom"/>
</dbReference>
<dbReference type="InterPro" id="IPR042099">
    <property type="entry name" value="ANL_N_sf"/>
</dbReference>
<dbReference type="PANTHER" id="PTHR24096:SF422">
    <property type="entry name" value="BCDNA.GH02901"/>
    <property type="match status" value="1"/>
</dbReference>
<dbReference type="PANTHER" id="PTHR24096">
    <property type="entry name" value="LONG-CHAIN-FATTY-ACID--COA LIGASE"/>
    <property type="match status" value="1"/>
</dbReference>
<dbReference type="Pfam" id="PF00501">
    <property type="entry name" value="AMP-binding"/>
    <property type="match status" value="1"/>
</dbReference>
<dbReference type="Pfam" id="PF13193">
    <property type="entry name" value="AMP-binding_C"/>
    <property type="match status" value="1"/>
</dbReference>
<dbReference type="SUPFAM" id="SSF56801">
    <property type="entry name" value="Acetyl-CoA synthetase-like"/>
    <property type="match status" value="1"/>
</dbReference>
<keyword id="KW-0067">ATP-binding</keyword>
<keyword id="KW-0436">Ligase</keyword>
<keyword id="KW-0547">Nucleotide-binding</keyword>
<keyword id="KW-1185">Reference proteome</keyword>
<feature type="chain" id="PRO_0000446602" description="Acyl-CoA ligase lcsD">
    <location>
        <begin position="1"/>
        <end position="386"/>
    </location>
</feature>
<feature type="region of interest" description="SBD1" evidence="2">
    <location>
        <begin position="62"/>
        <end position="132"/>
    </location>
</feature>
<feature type="region of interest" description="SBD2" evidence="2">
    <location>
        <begin position="133"/>
        <end position="195"/>
    </location>
</feature>
<feature type="region of interest" description="Disordered" evidence="3">
    <location>
        <begin position="352"/>
        <end position="386"/>
    </location>
</feature>
<feature type="binding site" evidence="1">
    <location>
        <begin position="107"/>
        <end position="115"/>
    </location>
    <ligand>
        <name>ATP</name>
        <dbReference type="ChEBI" id="CHEBI:30616"/>
    </ligand>
</feature>
<feature type="binding site" evidence="1">
    <location>
        <position position="137"/>
    </location>
    <ligand>
        <name>substrate</name>
    </ligand>
</feature>
<feature type="binding site" evidence="1">
    <location>
        <position position="216"/>
    </location>
    <ligand>
        <name>ATP</name>
        <dbReference type="ChEBI" id="CHEBI:30616"/>
    </ligand>
</feature>
<feature type="binding site" evidence="1">
    <location>
        <position position="235"/>
    </location>
    <ligand>
        <name>ATP</name>
        <dbReference type="ChEBI" id="CHEBI:30616"/>
    </ligand>
</feature>
<feature type="binding site" evidence="1">
    <location>
        <begin position="243"/>
        <end position="245"/>
    </location>
    <ligand>
        <name>CoA</name>
        <dbReference type="ChEBI" id="CHEBI:57287"/>
    </ligand>
</feature>
<feature type="binding site" evidence="1">
    <location>
        <begin position="313"/>
        <end position="316"/>
    </location>
    <ligand>
        <name>CoA</name>
        <dbReference type="ChEBI" id="CHEBI:57287"/>
    </ligand>
</feature>
<feature type="binding site" evidence="1">
    <location>
        <position position="331"/>
    </location>
    <ligand>
        <name>ATP</name>
        <dbReference type="ChEBI" id="CHEBI:30616"/>
    </ligand>
</feature>
<reference key="1">
    <citation type="journal article" date="2016" name="PLoS Pathog.">
        <title>Biosynthesis of antibiotic leucinostatins in bio-control fungus Purpureocillium lilacinum and their inhibition on phytophthora revealed by genome mining.</title>
        <authorList>
            <person name="Wang G."/>
            <person name="Liu Z."/>
            <person name="Lin R."/>
            <person name="Li E."/>
            <person name="Mao Z."/>
            <person name="Ling J."/>
            <person name="Yang Y."/>
            <person name="Yin W.B."/>
            <person name="Xie B."/>
        </authorList>
    </citation>
    <scope>NUCLEOTIDE SEQUENCE [LARGE SCALE GENOMIC DNA]</scope>
    <scope>IDENTIFICATION</scope>
    <scope>FUNCTION</scope>
    <scope>DISRUPTION PHENOTYPE</scope>
    <scope>INDUCTION</scope>
    <scope>PATHWAY</scope>
    <source>
        <strain>PLBJ-1</strain>
    </source>
</reference>
<comment type="function">
    <text evidence="4 7">Acyl-CoA ligase; part of the gene cluster that mediates the biosynthesis of the lipopeptide antibiotics leucinostatins that show extensive biological activities, including antimalarial, antiviral, antibacterial, antifungal, and antitumor activities, as well as phytotoxic (PubMed:27416025). Leucinostatin A contains nine amino acid residues, including the unusual amino acid 4-methyl-L-proline (MePro), 2-amino-6-hydroxy-4-methyl-8-oxodecanoic acid (AHyMeOA), 3-hydroxyleucine (HyLeu), alpha-aminoisobutyric acid (AIB), beta-Ala, a 4-methylhex-2-enoic acid at the N-terminus as well as a N1,N1-dimethylpropane-1,2-diamine (DPD) at the C-terminus (Probable). The biosynthesis of leucinostatins is probably initiated with the assembly of 4-methylhex-2-enoic acid by a reducing PKS. Two reducing polyketide synthases, lcsB and lcsC, have been identified in the cluster and it is not clear which is the one that assembles 4-methylhex-2-enoic acid since both contain KS, AT, DH, cMT, ER, KR and ACP domains (Probable). The polyketide residue might be transferred to the NRPS lcsA, mediated by two additional enzymes, the acyl-CoA ligase lcsD and the thioesterase lcsE. The linear polyketide carboxylic acid, which is released from PKS, is converted to a CoA thioester by lcsD, and then lcsE hydrolyzes the thiol bond and shuttles the polyketide intermediate to lcsA (Probable). The C domain of the first module catalyzed the condensation of 4-methylhex-2-enoic acid and MePro carried by domain A1, followed by successive condensations of nine amino acids to trigger the elongation of the linear peptide. A5 and A6 domains of lcsA are proposed to incorporate leucine, A2 AHyMeOA, and A3 incorporates HyLeu. A4, A7 and A8 incorporate AIB (Probable). The AHyMeOA in leucinostatin A activated by the A2 might be produced by the second PKS (lcsB or lcsC) present within the cluster (Probable). The MePro is probably produced via leucine cyclization and may originate from a separate pathway, independent of the cluster. Another nonproteinogenic amino acid, beta-Ala, could be produced by an aspartic acid decarboxylase also localized outside of the cluster. Two candidates are VFPBJ_01400 and VFPBJ_10476 (Probable). The final peptide scaffold may be released by the NAD(P)H-dependent thioester reductase (TE) at the C-terminal region of lcsA (Probable). Transamination of the lcsA product by the transaminase lcsP may produce DPD at the C-terminus (Probable). Further hydroxylation steps performed alternatively by the cytochrome P450 monooxygenases lcsI, lcsK and lcsN then yield the non-methylated leucinostatins precursor. It is also possible that leucines can be hydroxylated prior to their incorporation into the peptide (Probable). Varying extents of methylation then lead to the formation of leucinostatins A and B (Probable).</text>
</comment>
<comment type="pathway">
    <text evidence="7">Secondary metabolite biosynthesis.</text>
</comment>
<comment type="induction">
    <text evidence="4">Expression is positively regulated by the leucinostatins biosynthesis cluster-specific transcription regulator lcsF.</text>
</comment>
<comment type="domain">
    <text evidence="2">Both substrate-binding domains (SBD1 and SBD2) are involved in the substrate recognition, and are sufficient to confer the substrate specificity.</text>
</comment>
<comment type="disruption phenotype">
    <text evidence="4">Abolishes the production of leucinostatins A and B.</text>
</comment>
<comment type="similarity">
    <text evidence="6">Belongs to the ATP-dependent AMP-binding enzyme family.</text>
</comment>
<organism>
    <name type="scientific">Purpureocillium lilacinum</name>
    <name type="common">Paecilomyces lilacinus</name>
    <dbReference type="NCBI Taxonomy" id="33203"/>
    <lineage>
        <taxon>Eukaryota</taxon>
        <taxon>Fungi</taxon>
        <taxon>Dikarya</taxon>
        <taxon>Ascomycota</taxon>
        <taxon>Pezizomycotina</taxon>
        <taxon>Sordariomycetes</taxon>
        <taxon>Hypocreomycetidae</taxon>
        <taxon>Hypocreales</taxon>
        <taxon>Ophiocordycipitaceae</taxon>
        <taxon>Purpureocillium</taxon>
    </lineage>
</organism>
<proteinExistence type="evidence at transcript level"/>
<protein>
    <recommendedName>
        <fullName evidence="5">Acyl-CoA ligase lcsD</fullName>
        <ecNumber evidence="7">6.2.1.-</ecNumber>
    </recommendedName>
    <alternativeName>
        <fullName evidence="5">Leucinostatins biosynthesis cluster protein D</fullName>
    </alternativeName>
</protein>
<name>LCSD_PURLI</name>
<accession>A0A179HJB8</accession>
<evidence type="ECO:0000250" key="1">
    <source>
        <dbReference type="UniProtKB" id="Q08AH3"/>
    </source>
</evidence>
<evidence type="ECO:0000250" key="2">
    <source>
        <dbReference type="UniProtKB" id="Q42524"/>
    </source>
</evidence>
<evidence type="ECO:0000256" key="3">
    <source>
        <dbReference type="SAM" id="MobiDB-lite"/>
    </source>
</evidence>
<evidence type="ECO:0000269" key="4">
    <source>
    </source>
</evidence>
<evidence type="ECO:0000303" key="5">
    <source>
    </source>
</evidence>
<evidence type="ECO:0000305" key="6"/>
<evidence type="ECO:0000305" key="7">
    <source>
    </source>
</evidence>
<gene>
    <name evidence="5" type="primary">lcsD</name>
    <name type="ORF">VFPBJ_02533</name>
    <name type="ORF">VFPFJ_04705</name>
</gene>